<sequence length="29" mass="3016">GILDSLKNLAKNAAQILLNKASCKLSGQC</sequence>
<dbReference type="SMR" id="P86025"/>
<dbReference type="GO" id="GO:0005576">
    <property type="term" value="C:extracellular region"/>
    <property type="evidence" value="ECO:0000314"/>
    <property type="project" value="UniProtKB"/>
</dbReference>
<dbReference type="GO" id="GO:0042742">
    <property type="term" value="P:defense response to bacterium"/>
    <property type="evidence" value="ECO:0007669"/>
    <property type="project" value="UniProtKB-KW"/>
</dbReference>
<dbReference type="InterPro" id="IPR012521">
    <property type="entry name" value="Antimicrobial_frog_2"/>
</dbReference>
<dbReference type="Pfam" id="PF08023">
    <property type="entry name" value="Antimicrobial_2"/>
    <property type="match status" value="1"/>
</dbReference>
<feature type="peptide" id="PRO_0000361066" description="Brevinin-2Rd" evidence="3">
    <location>
        <begin position="1"/>
        <end position="29"/>
    </location>
</feature>
<feature type="disulfide bond" evidence="3">
    <location>
        <begin position="23"/>
        <end position="29"/>
    </location>
</feature>
<proteinExistence type="evidence at protein level"/>
<accession>P86025</accession>
<keyword id="KW-0878">Amphibian defense peptide</keyword>
<keyword id="KW-0044">Antibiotic</keyword>
<keyword id="KW-0929">Antimicrobial</keyword>
<keyword id="KW-0903">Direct protein sequencing</keyword>
<keyword id="KW-1015">Disulfide bond</keyword>
<keyword id="KW-0964">Secreted</keyword>
<name>BR2D_PELRI</name>
<reference evidence="5" key="1">
    <citation type="journal article" date="2008" name="Rapid Commun. Mass Spectrom.">
        <title>De novo sequencing of peptides secreted by the skin glands of the caucasian green frog Rana ridibunda.</title>
        <authorList>
            <person name="Samgina T.Y."/>
            <person name="Artemenko K.A."/>
            <person name="Gorshkov V.A."/>
            <person name="Ogourtsov S.V."/>
            <person name="Zubarev R.A."/>
            <person name="Lebedev A.T."/>
        </authorList>
    </citation>
    <scope>PROTEIN SEQUENCE</scope>
    <scope>MASS SPECTROMETRY</scope>
    <scope>DISULFIDE BOND</scope>
    <source>
        <tissue evidence="3">Skin secretion</tissue>
    </source>
</reference>
<comment type="function">
    <text evidence="1">Antimicrobial peptide.</text>
</comment>
<comment type="subcellular location">
    <subcellularLocation>
        <location evidence="5">Secreted</location>
    </subcellularLocation>
</comment>
<comment type="tissue specificity">
    <text evidence="5">Expressed by the skin glands.</text>
</comment>
<comment type="mass spectrometry" mass="3012.0" method="Electrospray" evidence="3"/>
<comment type="similarity">
    <text evidence="2">Belongs to the frog skin active peptide (FSAP) family. Brevinin subfamily.</text>
</comment>
<protein>
    <recommendedName>
        <fullName evidence="4">Brevinin-2Rd</fullName>
    </recommendedName>
</protein>
<evidence type="ECO:0000250" key="1">
    <source>
        <dbReference type="UniProtKB" id="P40840"/>
    </source>
</evidence>
<evidence type="ECO:0000255" key="2"/>
<evidence type="ECO:0000269" key="3">
    <source>
    </source>
</evidence>
<evidence type="ECO:0000303" key="4">
    <source>
    </source>
</evidence>
<evidence type="ECO:0000305" key="5"/>
<organism>
    <name type="scientific">Pelophylax ridibundus</name>
    <name type="common">Marsh frog</name>
    <name type="synonym">Rana ridibunda</name>
    <dbReference type="NCBI Taxonomy" id="8406"/>
    <lineage>
        <taxon>Eukaryota</taxon>
        <taxon>Metazoa</taxon>
        <taxon>Chordata</taxon>
        <taxon>Craniata</taxon>
        <taxon>Vertebrata</taxon>
        <taxon>Euteleostomi</taxon>
        <taxon>Amphibia</taxon>
        <taxon>Batrachia</taxon>
        <taxon>Anura</taxon>
        <taxon>Neobatrachia</taxon>
        <taxon>Ranoidea</taxon>
        <taxon>Ranidae</taxon>
        <taxon>Pelophylax</taxon>
    </lineage>
</organism>